<protein>
    <recommendedName>
        <fullName evidence="1">Large ribosomal subunit protein uL16</fullName>
    </recommendedName>
    <alternativeName>
        <fullName evidence="3">50S ribosomal protein L16</fullName>
    </alternativeName>
</protein>
<accession>B0U0Y2</accession>
<evidence type="ECO:0000255" key="1">
    <source>
        <dbReference type="HAMAP-Rule" id="MF_01342"/>
    </source>
</evidence>
<evidence type="ECO:0000256" key="2">
    <source>
        <dbReference type="SAM" id="MobiDB-lite"/>
    </source>
</evidence>
<evidence type="ECO:0000305" key="3"/>
<keyword id="KW-0687">Ribonucleoprotein</keyword>
<keyword id="KW-0689">Ribosomal protein</keyword>
<keyword id="KW-0694">RNA-binding</keyword>
<keyword id="KW-0699">rRNA-binding</keyword>
<keyword id="KW-0820">tRNA-binding</keyword>
<feature type="chain" id="PRO_1000086757" description="Large ribosomal subunit protein uL16">
    <location>
        <begin position="1"/>
        <end position="137"/>
    </location>
</feature>
<feature type="region of interest" description="Disordered" evidence="2">
    <location>
        <begin position="1"/>
        <end position="20"/>
    </location>
</feature>
<dbReference type="EMBL" id="CP000937">
    <property type="protein sequence ID" value="ABZ86798.1"/>
    <property type="molecule type" value="Genomic_DNA"/>
</dbReference>
<dbReference type="SMR" id="B0U0Y2"/>
<dbReference type="KEGG" id="fph:Fphi_0579"/>
<dbReference type="eggNOG" id="COG0197">
    <property type="taxonomic scope" value="Bacteria"/>
</dbReference>
<dbReference type="HOGENOM" id="CLU_078858_2_1_6"/>
<dbReference type="GO" id="GO:0022625">
    <property type="term" value="C:cytosolic large ribosomal subunit"/>
    <property type="evidence" value="ECO:0007669"/>
    <property type="project" value="TreeGrafter"/>
</dbReference>
<dbReference type="GO" id="GO:0019843">
    <property type="term" value="F:rRNA binding"/>
    <property type="evidence" value="ECO:0007669"/>
    <property type="project" value="UniProtKB-UniRule"/>
</dbReference>
<dbReference type="GO" id="GO:0003735">
    <property type="term" value="F:structural constituent of ribosome"/>
    <property type="evidence" value="ECO:0007669"/>
    <property type="project" value="InterPro"/>
</dbReference>
<dbReference type="GO" id="GO:0000049">
    <property type="term" value="F:tRNA binding"/>
    <property type="evidence" value="ECO:0007669"/>
    <property type="project" value="UniProtKB-KW"/>
</dbReference>
<dbReference type="GO" id="GO:0006412">
    <property type="term" value="P:translation"/>
    <property type="evidence" value="ECO:0007669"/>
    <property type="project" value="UniProtKB-UniRule"/>
</dbReference>
<dbReference type="CDD" id="cd01433">
    <property type="entry name" value="Ribosomal_L16_L10e"/>
    <property type="match status" value="1"/>
</dbReference>
<dbReference type="FunFam" id="3.90.1170.10:FF:000001">
    <property type="entry name" value="50S ribosomal protein L16"/>
    <property type="match status" value="1"/>
</dbReference>
<dbReference type="Gene3D" id="3.90.1170.10">
    <property type="entry name" value="Ribosomal protein L10e/L16"/>
    <property type="match status" value="1"/>
</dbReference>
<dbReference type="HAMAP" id="MF_01342">
    <property type="entry name" value="Ribosomal_uL16"/>
    <property type="match status" value="1"/>
</dbReference>
<dbReference type="InterPro" id="IPR047873">
    <property type="entry name" value="Ribosomal_uL16"/>
</dbReference>
<dbReference type="InterPro" id="IPR000114">
    <property type="entry name" value="Ribosomal_uL16_bact-type"/>
</dbReference>
<dbReference type="InterPro" id="IPR020798">
    <property type="entry name" value="Ribosomal_uL16_CS"/>
</dbReference>
<dbReference type="InterPro" id="IPR016180">
    <property type="entry name" value="Ribosomal_uL16_dom"/>
</dbReference>
<dbReference type="InterPro" id="IPR036920">
    <property type="entry name" value="Ribosomal_uL16_sf"/>
</dbReference>
<dbReference type="NCBIfam" id="TIGR01164">
    <property type="entry name" value="rplP_bact"/>
    <property type="match status" value="1"/>
</dbReference>
<dbReference type="PANTHER" id="PTHR12220">
    <property type="entry name" value="50S/60S RIBOSOMAL PROTEIN L16"/>
    <property type="match status" value="1"/>
</dbReference>
<dbReference type="PANTHER" id="PTHR12220:SF13">
    <property type="entry name" value="LARGE RIBOSOMAL SUBUNIT PROTEIN UL16M"/>
    <property type="match status" value="1"/>
</dbReference>
<dbReference type="Pfam" id="PF00252">
    <property type="entry name" value="Ribosomal_L16"/>
    <property type="match status" value="1"/>
</dbReference>
<dbReference type="PRINTS" id="PR00060">
    <property type="entry name" value="RIBOSOMALL16"/>
</dbReference>
<dbReference type="SUPFAM" id="SSF54686">
    <property type="entry name" value="Ribosomal protein L16p/L10e"/>
    <property type="match status" value="1"/>
</dbReference>
<dbReference type="PROSITE" id="PS00586">
    <property type="entry name" value="RIBOSOMAL_L16_1"/>
    <property type="match status" value="1"/>
</dbReference>
<dbReference type="PROSITE" id="PS00701">
    <property type="entry name" value="RIBOSOMAL_L16_2"/>
    <property type="match status" value="1"/>
</dbReference>
<comment type="function">
    <text evidence="1">Binds 23S rRNA and is also seen to make contacts with the A and possibly P site tRNAs.</text>
</comment>
<comment type="subunit">
    <text evidence="1">Part of the 50S ribosomal subunit.</text>
</comment>
<comment type="similarity">
    <text evidence="1">Belongs to the universal ribosomal protein uL16 family.</text>
</comment>
<name>RL16_FRAP2</name>
<organism>
    <name type="scientific">Francisella philomiragia subsp. philomiragia (strain ATCC 25017 / CCUG 19701 / FSC 153 / O#319-036)</name>
    <dbReference type="NCBI Taxonomy" id="484022"/>
    <lineage>
        <taxon>Bacteria</taxon>
        <taxon>Pseudomonadati</taxon>
        <taxon>Pseudomonadota</taxon>
        <taxon>Gammaproteobacteria</taxon>
        <taxon>Thiotrichales</taxon>
        <taxon>Francisellaceae</taxon>
        <taxon>Francisella</taxon>
    </lineage>
</organism>
<gene>
    <name evidence="1" type="primary">rplP</name>
    <name type="ordered locus">Fphi_0579</name>
</gene>
<reference key="1">
    <citation type="submission" date="2007-12" db="EMBL/GenBank/DDBJ databases">
        <title>Complete sequence of chromosome of Francisella philomiragia subsp. philomiragia ATCC 25017.</title>
        <authorList>
            <consortium name="US DOE Joint Genome Institute"/>
            <person name="Copeland A."/>
            <person name="Lucas S."/>
            <person name="Lapidus A."/>
            <person name="Barry K."/>
            <person name="Detter J.C."/>
            <person name="Glavina del Rio T."/>
            <person name="Hammon N."/>
            <person name="Israni S."/>
            <person name="Dalin E."/>
            <person name="Tice H."/>
            <person name="Pitluck S."/>
            <person name="Chain P."/>
            <person name="Malfatti S."/>
            <person name="Shin M."/>
            <person name="Vergez L."/>
            <person name="Schmutz J."/>
            <person name="Larimer F."/>
            <person name="Land M."/>
            <person name="Hauser L."/>
            <person name="Richardson P."/>
        </authorList>
    </citation>
    <scope>NUCLEOTIDE SEQUENCE [LARGE SCALE GENOMIC DNA]</scope>
    <source>
        <strain>ATCC 25017 / CCUG 19701 / FSC 153 / O#319-036</strain>
    </source>
</reference>
<proteinExistence type="inferred from homology"/>
<sequence>MLQPKRTKFRKQQKMRNRGLAHRGNKVSFGEFGLQATSRGRVTARQIEAGRRAISRHIKRGGKIWIRIFPDKPITQKPLEVRMGKGKGSVEYWVAQIQPGRVLYEITGVKEELAREAFARAAAKMPVQTTFVEKQVM</sequence>